<dbReference type="EC" id="2.4.99.17" evidence="1"/>
<dbReference type="EMBL" id="AE000511">
    <property type="protein sequence ID" value="AAD08102.1"/>
    <property type="molecule type" value="Genomic_DNA"/>
</dbReference>
<dbReference type="PIR" id="F64652">
    <property type="entry name" value="F64652"/>
</dbReference>
<dbReference type="RefSeq" id="NP_207853.1">
    <property type="nucleotide sequence ID" value="NC_000915.1"/>
</dbReference>
<dbReference type="RefSeq" id="WP_000657423.1">
    <property type="nucleotide sequence ID" value="NC_018939.1"/>
</dbReference>
<dbReference type="SMR" id="O25702"/>
<dbReference type="FunCoup" id="O25702">
    <property type="interactions" value="302"/>
</dbReference>
<dbReference type="STRING" id="85962.HP_1062"/>
<dbReference type="PaxDb" id="85962-C694_05490"/>
<dbReference type="EnsemblBacteria" id="AAD08102">
    <property type="protein sequence ID" value="AAD08102"/>
    <property type="gene ID" value="HP_1062"/>
</dbReference>
<dbReference type="KEGG" id="heo:C694_05490"/>
<dbReference type="KEGG" id="hpy:HP_1062"/>
<dbReference type="PATRIC" id="fig|85962.47.peg.1141"/>
<dbReference type="eggNOG" id="COG0809">
    <property type="taxonomic scope" value="Bacteria"/>
</dbReference>
<dbReference type="InParanoid" id="O25702"/>
<dbReference type="OrthoDB" id="9805933at2"/>
<dbReference type="PhylomeDB" id="O25702"/>
<dbReference type="UniPathway" id="UPA00392"/>
<dbReference type="Proteomes" id="UP000000429">
    <property type="component" value="Chromosome"/>
</dbReference>
<dbReference type="GO" id="GO:0005737">
    <property type="term" value="C:cytoplasm"/>
    <property type="evidence" value="ECO:0007669"/>
    <property type="project" value="UniProtKB-SubCell"/>
</dbReference>
<dbReference type="GO" id="GO:0051075">
    <property type="term" value="F:S-adenosylmethionine:tRNA ribosyltransferase-isomerase activity"/>
    <property type="evidence" value="ECO:0000318"/>
    <property type="project" value="GO_Central"/>
</dbReference>
<dbReference type="GO" id="GO:0008616">
    <property type="term" value="P:queuosine biosynthetic process"/>
    <property type="evidence" value="ECO:0000318"/>
    <property type="project" value="GO_Central"/>
</dbReference>
<dbReference type="GO" id="GO:0002099">
    <property type="term" value="P:tRNA wobble guanine modification"/>
    <property type="evidence" value="ECO:0000318"/>
    <property type="project" value="GO_Central"/>
</dbReference>
<dbReference type="FunFam" id="2.40.10.240:FF:000005">
    <property type="entry name" value="S-adenosylmethionine:tRNA ribosyltransferase-isomerase"/>
    <property type="match status" value="1"/>
</dbReference>
<dbReference type="Gene3D" id="2.40.10.240">
    <property type="entry name" value="QueA-like"/>
    <property type="match status" value="1"/>
</dbReference>
<dbReference type="Gene3D" id="3.40.1780.10">
    <property type="entry name" value="QueA-like"/>
    <property type="match status" value="1"/>
</dbReference>
<dbReference type="HAMAP" id="MF_00113">
    <property type="entry name" value="QueA"/>
    <property type="match status" value="1"/>
</dbReference>
<dbReference type="InterPro" id="IPR003699">
    <property type="entry name" value="QueA"/>
</dbReference>
<dbReference type="InterPro" id="IPR042118">
    <property type="entry name" value="QueA_dom1"/>
</dbReference>
<dbReference type="InterPro" id="IPR042119">
    <property type="entry name" value="QueA_dom2"/>
</dbReference>
<dbReference type="InterPro" id="IPR036100">
    <property type="entry name" value="QueA_sf"/>
</dbReference>
<dbReference type="NCBIfam" id="NF001140">
    <property type="entry name" value="PRK00147.1"/>
    <property type="match status" value="1"/>
</dbReference>
<dbReference type="NCBIfam" id="TIGR00113">
    <property type="entry name" value="queA"/>
    <property type="match status" value="1"/>
</dbReference>
<dbReference type="PANTHER" id="PTHR30307">
    <property type="entry name" value="S-ADENOSYLMETHIONINE:TRNA RIBOSYLTRANSFERASE-ISOMERASE"/>
    <property type="match status" value="1"/>
</dbReference>
<dbReference type="PANTHER" id="PTHR30307:SF0">
    <property type="entry name" value="S-ADENOSYLMETHIONINE:TRNA RIBOSYLTRANSFERASE-ISOMERASE"/>
    <property type="match status" value="1"/>
</dbReference>
<dbReference type="Pfam" id="PF02547">
    <property type="entry name" value="Queuosine_synth"/>
    <property type="match status" value="1"/>
</dbReference>
<dbReference type="SUPFAM" id="SSF111337">
    <property type="entry name" value="QueA-like"/>
    <property type="match status" value="1"/>
</dbReference>
<protein>
    <recommendedName>
        <fullName evidence="1">S-adenosylmethionine:tRNA ribosyltransferase-isomerase</fullName>
        <ecNumber evidence="1">2.4.99.17</ecNumber>
    </recommendedName>
    <alternativeName>
        <fullName evidence="1">Queuosine biosynthesis protein QueA</fullName>
    </alternativeName>
</protein>
<keyword id="KW-0963">Cytoplasm</keyword>
<keyword id="KW-0671">Queuosine biosynthesis</keyword>
<keyword id="KW-1185">Reference proteome</keyword>
<keyword id="KW-0949">S-adenosyl-L-methionine</keyword>
<keyword id="KW-0808">Transferase</keyword>
<feature type="chain" id="PRO_0000165409" description="S-adenosylmethionine:tRNA ribosyltransferase-isomerase">
    <location>
        <begin position="1"/>
        <end position="345"/>
    </location>
</feature>
<proteinExistence type="inferred from homology"/>
<sequence>MKEFDLESYDYYLPKELIASYPVLPKEKAKLLVYERRSQKITHTTFEHVLDFFPKNALIVLNDTKVIKARLFGSKHAFLPSKTTEVFFHRFFKNNTALTQIKGKIKVGDKIFFDANYHAEVLELLHNGQRLIAFYDNKTPLNQENILKLLEQYGHMPLPPYIKRADESLDAHEYQSVFAKHMGAVAAPTASLHFSQNTLEKLLKDFKHAFLTLHVGAGTFLSVETKDIREHQIHTEVLRIPKKSQEILQKSQEILCVGTTALRSVEYFKRLENPNQEAFECDIFLHFANPILHVNYLLTNFHLPKSSLLMLVSTMIGLEKTKEIYKTAIEKKYRFYSYGDGMLIL</sequence>
<name>QUEA_HELPY</name>
<comment type="function">
    <text evidence="1">Transfers and isomerizes the ribose moiety from AdoMet to the 7-aminomethyl group of 7-deazaguanine (preQ1-tRNA) to give epoxyqueuosine (oQ-tRNA).</text>
</comment>
<comment type="catalytic activity">
    <reaction evidence="1">
        <text>7-aminomethyl-7-carbaguanosine(34) in tRNA + S-adenosyl-L-methionine = epoxyqueuosine(34) in tRNA + adenine + L-methionine + 2 H(+)</text>
        <dbReference type="Rhea" id="RHEA:32155"/>
        <dbReference type="Rhea" id="RHEA-COMP:10342"/>
        <dbReference type="Rhea" id="RHEA-COMP:18582"/>
        <dbReference type="ChEBI" id="CHEBI:15378"/>
        <dbReference type="ChEBI" id="CHEBI:16708"/>
        <dbReference type="ChEBI" id="CHEBI:57844"/>
        <dbReference type="ChEBI" id="CHEBI:59789"/>
        <dbReference type="ChEBI" id="CHEBI:82833"/>
        <dbReference type="ChEBI" id="CHEBI:194443"/>
        <dbReference type="EC" id="2.4.99.17"/>
    </reaction>
</comment>
<comment type="pathway">
    <text evidence="1">tRNA modification; tRNA-queuosine biosynthesis.</text>
</comment>
<comment type="subunit">
    <text evidence="1">Monomer.</text>
</comment>
<comment type="subcellular location">
    <subcellularLocation>
        <location evidence="1">Cytoplasm</location>
    </subcellularLocation>
</comment>
<comment type="similarity">
    <text evidence="1">Belongs to the QueA family.</text>
</comment>
<evidence type="ECO:0000255" key="1">
    <source>
        <dbReference type="HAMAP-Rule" id="MF_00113"/>
    </source>
</evidence>
<gene>
    <name evidence="1" type="primary">queA</name>
    <name type="ordered locus">HP_1062</name>
</gene>
<reference key="1">
    <citation type="journal article" date="1997" name="Nature">
        <title>The complete genome sequence of the gastric pathogen Helicobacter pylori.</title>
        <authorList>
            <person name="Tomb J.-F."/>
            <person name="White O."/>
            <person name="Kerlavage A.R."/>
            <person name="Clayton R.A."/>
            <person name="Sutton G.G."/>
            <person name="Fleischmann R.D."/>
            <person name="Ketchum K.A."/>
            <person name="Klenk H.-P."/>
            <person name="Gill S.R."/>
            <person name="Dougherty B.A."/>
            <person name="Nelson K.E."/>
            <person name="Quackenbush J."/>
            <person name="Zhou L."/>
            <person name="Kirkness E.F."/>
            <person name="Peterson S.N."/>
            <person name="Loftus B.J."/>
            <person name="Richardson D.L."/>
            <person name="Dodson R.J."/>
            <person name="Khalak H.G."/>
            <person name="Glodek A."/>
            <person name="McKenney K."/>
            <person name="FitzGerald L.M."/>
            <person name="Lee N."/>
            <person name="Adams M.D."/>
            <person name="Hickey E.K."/>
            <person name="Berg D.E."/>
            <person name="Gocayne J.D."/>
            <person name="Utterback T.R."/>
            <person name="Peterson J.D."/>
            <person name="Kelley J.M."/>
            <person name="Cotton M.D."/>
            <person name="Weidman J.F."/>
            <person name="Fujii C."/>
            <person name="Bowman C."/>
            <person name="Watthey L."/>
            <person name="Wallin E."/>
            <person name="Hayes W.S."/>
            <person name="Borodovsky M."/>
            <person name="Karp P.D."/>
            <person name="Smith H.O."/>
            <person name="Fraser C.M."/>
            <person name="Venter J.C."/>
        </authorList>
    </citation>
    <scope>NUCLEOTIDE SEQUENCE [LARGE SCALE GENOMIC DNA]</scope>
    <source>
        <strain>ATCC 700392 / 26695</strain>
    </source>
</reference>
<organism>
    <name type="scientific">Helicobacter pylori (strain ATCC 700392 / 26695)</name>
    <name type="common">Campylobacter pylori</name>
    <dbReference type="NCBI Taxonomy" id="85962"/>
    <lineage>
        <taxon>Bacteria</taxon>
        <taxon>Pseudomonadati</taxon>
        <taxon>Campylobacterota</taxon>
        <taxon>Epsilonproteobacteria</taxon>
        <taxon>Campylobacterales</taxon>
        <taxon>Helicobacteraceae</taxon>
        <taxon>Helicobacter</taxon>
    </lineage>
</organism>
<accession>O25702</accession>